<reference key="1">
    <citation type="submission" date="2006-12" db="EMBL/GenBank/DDBJ databases">
        <title>Complete sequence of chromosome 1 of Acidovorax sp. JS42.</title>
        <authorList>
            <person name="Copeland A."/>
            <person name="Lucas S."/>
            <person name="Lapidus A."/>
            <person name="Barry K."/>
            <person name="Detter J.C."/>
            <person name="Glavina del Rio T."/>
            <person name="Dalin E."/>
            <person name="Tice H."/>
            <person name="Pitluck S."/>
            <person name="Chertkov O."/>
            <person name="Brettin T."/>
            <person name="Bruce D."/>
            <person name="Han C."/>
            <person name="Tapia R."/>
            <person name="Gilna P."/>
            <person name="Schmutz J."/>
            <person name="Larimer F."/>
            <person name="Land M."/>
            <person name="Hauser L."/>
            <person name="Kyrpides N."/>
            <person name="Kim E."/>
            <person name="Stahl D."/>
            <person name="Richardson P."/>
        </authorList>
    </citation>
    <scope>NUCLEOTIDE SEQUENCE [LARGE SCALE GENOMIC DNA]</scope>
    <source>
        <strain>JS42</strain>
    </source>
</reference>
<dbReference type="EC" id="6.3.2.8" evidence="1"/>
<dbReference type="EMBL" id="CP000539">
    <property type="protein sequence ID" value="ABM43780.1"/>
    <property type="molecule type" value="Genomic_DNA"/>
</dbReference>
<dbReference type="SMR" id="A1WC05"/>
<dbReference type="STRING" id="232721.Ajs_3669"/>
<dbReference type="KEGG" id="ajs:Ajs_3669"/>
<dbReference type="eggNOG" id="COG0773">
    <property type="taxonomic scope" value="Bacteria"/>
</dbReference>
<dbReference type="HOGENOM" id="CLU_028104_2_2_4"/>
<dbReference type="UniPathway" id="UPA00219"/>
<dbReference type="Proteomes" id="UP000000645">
    <property type="component" value="Chromosome"/>
</dbReference>
<dbReference type="GO" id="GO:0005737">
    <property type="term" value="C:cytoplasm"/>
    <property type="evidence" value="ECO:0007669"/>
    <property type="project" value="UniProtKB-SubCell"/>
</dbReference>
<dbReference type="GO" id="GO:0005524">
    <property type="term" value="F:ATP binding"/>
    <property type="evidence" value="ECO:0007669"/>
    <property type="project" value="UniProtKB-UniRule"/>
</dbReference>
<dbReference type="GO" id="GO:0008763">
    <property type="term" value="F:UDP-N-acetylmuramate-L-alanine ligase activity"/>
    <property type="evidence" value="ECO:0007669"/>
    <property type="project" value="UniProtKB-UniRule"/>
</dbReference>
<dbReference type="GO" id="GO:0051301">
    <property type="term" value="P:cell division"/>
    <property type="evidence" value="ECO:0007669"/>
    <property type="project" value="UniProtKB-KW"/>
</dbReference>
<dbReference type="GO" id="GO:0071555">
    <property type="term" value="P:cell wall organization"/>
    <property type="evidence" value="ECO:0007669"/>
    <property type="project" value="UniProtKB-KW"/>
</dbReference>
<dbReference type="GO" id="GO:0009252">
    <property type="term" value="P:peptidoglycan biosynthetic process"/>
    <property type="evidence" value="ECO:0007669"/>
    <property type="project" value="UniProtKB-UniRule"/>
</dbReference>
<dbReference type="GO" id="GO:0008360">
    <property type="term" value="P:regulation of cell shape"/>
    <property type="evidence" value="ECO:0007669"/>
    <property type="project" value="UniProtKB-KW"/>
</dbReference>
<dbReference type="FunFam" id="3.40.1190.10:FF:000001">
    <property type="entry name" value="UDP-N-acetylmuramate--L-alanine ligase"/>
    <property type="match status" value="1"/>
</dbReference>
<dbReference type="Gene3D" id="3.90.190.20">
    <property type="entry name" value="Mur ligase, C-terminal domain"/>
    <property type="match status" value="1"/>
</dbReference>
<dbReference type="Gene3D" id="3.40.1190.10">
    <property type="entry name" value="Mur-like, catalytic domain"/>
    <property type="match status" value="1"/>
</dbReference>
<dbReference type="Gene3D" id="3.40.50.720">
    <property type="entry name" value="NAD(P)-binding Rossmann-like Domain"/>
    <property type="match status" value="1"/>
</dbReference>
<dbReference type="HAMAP" id="MF_00046">
    <property type="entry name" value="MurC"/>
    <property type="match status" value="1"/>
</dbReference>
<dbReference type="InterPro" id="IPR036565">
    <property type="entry name" value="Mur-like_cat_sf"/>
</dbReference>
<dbReference type="InterPro" id="IPR004101">
    <property type="entry name" value="Mur_ligase_C"/>
</dbReference>
<dbReference type="InterPro" id="IPR036615">
    <property type="entry name" value="Mur_ligase_C_dom_sf"/>
</dbReference>
<dbReference type="InterPro" id="IPR013221">
    <property type="entry name" value="Mur_ligase_cen"/>
</dbReference>
<dbReference type="InterPro" id="IPR000713">
    <property type="entry name" value="Mur_ligase_N"/>
</dbReference>
<dbReference type="InterPro" id="IPR050061">
    <property type="entry name" value="MurCDEF_pg_biosynth"/>
</dbReference>
<dbReference type="InterPro" id="IPR005758">
    <property type="entry name" value="UDP-N-AcMur_Ala_ligase_MurC"/>
</dbReference>
<dbReference type="NCBIfam" id="TIGR01082">
    <property type="entry name" value="murC"/>
    <property type="match status" value="1"/>
</dbReference>
<dbReference type="PANTHER" id="PTHR43445:SF3">
    <property type="entry name" value="UDP-N-ACETYLMURAMATE--L-ALANINE LIGASE"/>
    <property type="match status" value="1"/>
</dbReference>
<dbReference type="PANTHER" id="PTHR43445">
    <property type="entry name" value="UDP-N-ACETYLMURAMATE--L-ALANINE LIGASE-RELATED"/>
    <property type="match status" value="1"/>
</dbReference>
<dbReference type="Pfam" id="PF01225">
    <property type="entry name" value="Mur_ligase"/>
    <property type="match status" value="1"/>
</dbReference>
<dbReference type="Pfam" id="PF02875">
    <property type="entry name" value="Mur_ligase_C"/>
    <property type="match status" value="1"/>
</dbReference>
<dbReference type="Pfam" id="PF08245">
    <property type="entry name" value="Mur_ligase_M"/>
    <property type="match status" value="1"/>
</dbReference>
<dbReference type="SUPFAM" id="SSF51984">
    <property type="entry name" value="MurCD N-terminal domain"/>
    <property type="match status" value="1"/>
</dbReference>
<dbReference type="SUPFAM" id="SSF53623">
    <property type="entry name" value="MurD-like peptide ligases, catalytic domain"/>
    <property type="match status" value="1"/>
</dbReference>
<dbReference type="SUPFAM" id="SSF53244">
    <property type="entry name" value="MurD-like peptide ligases, peptide-binding domain"/>
    <property type="match status" value="1"/>
</dbReference>
<accession>A1WC05</accession>
<organism>
    <name type="scientific">Acidovorax sp. (strain JS42)</name>
    <dbReference type="NCBI Taxonomy" id="232721"/>
    <lineage>
        <taxon>Bacteria</taxon>
        <taxon>Pseudomonadati</taxon>
        <taxon>Pseudomonadota</taxon>
        <taxon>Betaproteobacteria</taxon>
        <taxon>Burkholderiales</taxon>
        <taxon>Comamonadaceae</taxon>
        <taxon>Acidovorax</taxon>
    </lineage>
</organism>
<name>MURC_ACISJ</name>
<evidence type="ECO:0000255" key="1">
    <source>
        <dbReference type="HAMAP-Rule" id="MF_00046"/>
    </source>
</evidence>
<comment type="function">
    <text evidence="1">Cell wall formation.</text>
</comment>
<comment type="catalytic activity">
    <reaction evidence="1">
        <text>UDP-N-acetyl-alpha-D-muramate + L-alanine + ATP = UDP-N-acetyl-alpha-D-muramoyl-L-alanine + ADP + phosphate + H(+)</text>
        <dbReference type="Rhea" id="RHEA:23372"/>
        <dbReference type="ChEBI" id="CHEBI:15378"/>
        <dbReference type="ChEBI" id="CHEBI:30616"/>
        <dbReference type="ChEBI" id="CHEBI:43474"/>
        <dbReference type="ChEBI" id="CHEBI:57972"/>
        <dbReference type="ChEBI" id="CHEBI:70757"/>
        <dbReference type="ChEBI" id="CHEBI:83898"/>
        <dbReference type="ChEBI" id="CHEBI:456216"/>
        <dbReference type="EC" id="6.3.2.8"/>
    </reaction>
</comment>
<comment type="pathway">
    <text evidence="1">Cell wall biogenesis; peptidoglycan biosynthesis.</text>
</comment>
<comment type="subcellular location">
    <subcellularLocation>
        <location evidence="1">Cytoplasm</location>
    </subcellularLocation>
</comment>
<comment type="similarity">
    <text evidence="1">Belongs to the MurCDEF family.</text>
</comment>
<keyword id="KW-0067">ATP-binding</keyword>
<keyword id="KW-0131">Cell cycle</keyword>
<keyword id="KW-0132">Cell division</keyword>
<keyword id="KW-0133">Cell shape</keyword>
<keyword id="KW-0961">Cell wall biogenesis/degradation</keyword>
<keyword id="KW-0963">Cytoplasm</keyword>
<keyword id="KW-0436">Ligase</keyword>
<keyword id="KW-0547">Nucleotide-binding</keyword>
<keyword id="KW-0573">Peptidoglycan synthesis</keyword>
<proteinExistence type="inferred from homology"/>
<gene>
    <name evidence="1" type="primary">murC</name>
    <name type="ordered locus">Ajs_3669</name>
</gene>
<feature type="chain" id="PRO_1000004304" description="UDP-N-acetylmuramate--L-alanine ligase">
    <location>
        <begin position="1"/>
        <end position="477"/>
    </location>
</feature>
<feature type="binding site" evidence="1">
    <location>
        <begin position="112"/>
        <end position="118"/>
    </location>
    <ligand>
        <name>ATP</name>
        <dbReference type="ChEBI" id="CHEBI:30616"/>
    </ligand>
</feature>
<protein>
    <recommendedName>
        <fullName evidence="1">UDP-N-acetylmuramate--L-alanine ligase</fullName>
        <ecNumber evidence="1">6.3.2.8</ecNumber>
    </recommendedName>
    <alternativeName>
        <fullName evidence="1">UDP-N-acetylmuramoyl-L-alanine synthetase</fullName>
    </alternativeName>
</protein>
<sequence length="477" mass="50331">MKQAIRHIHFVGIGGSGMCGIAEVLHNLGYVVSGSDLADSPTLRRLQSLGVATHVGHAAAHIAGADAVVTSTAVQADNPEVLAARERKIPVVPRALMLTELMRLRKGIAIAGAHGKTTTTSLVASVLGEAGLDPTFVIGGRLNSAGTNAKLGQGEYIVVEADESDGSFLNLLPVMAVVTNIDADHMETYGHDFGRLKQAFVDFLHRMPFYGTAILCIDNPAVRDILPLVTCPVTSYGLSEDAEVRAVDVRAVGTQMHFTVQRRNGVTLPDLQVVLNLAGEHNVLNALAVIAVAAELNVPDDALLRALAGFTGVGRRFQRHGDLPAQGGGHFTLIEDYGHHPVEMAATLAAARGAYPGRRLVLAFQPHRYSRTRDCFEDFVKVLGTADAVLLTEVYAAGEAPIVAADGRSLARALRVAGTVEPVFIDNVADMPQRIAAGARDGDVVLCMGAGSIGGVPAKVVDLLQKNELLAQEGRAQ</sequence>